<keyword id="KW-0131">Cell cycle</keyword>
<keyword id="KW-0132">Cell division</keyword>
<keyword id="KW-0175">Coiled coil</keyword>
<keyword id="KW-0963">Cytoplasm</keyword>
<keyword id="KW-0717">Septation</keyword>
<evidence type="ECO:0000255" key="1">
    <source>
        <dbReference type="HAMAP-Rule" id="MF_01196"/>
    </source>
</evidence>
<protein>
    <recommendedName>
        <fullName evidence="1">Cell division protein ZapB</fullName>
    </recommendedName>
</protein>
<dbReference type="EMBL" id="CP001277">
    <property type="protein sequence ID" value="ACQ67308.1"/>
    <property type="molecule type" value="Genomic_DNA"/>
</dbReference>
<dbReference type="SMR" id="C4K415"/>
<dbReference type="STRING" id="572265.HDEF_0561"/>
<dbReference type="KEGG" id="hde:HDEF_0561"/>
<dbReference type="eggNOG" id="COG3074">
    <property type="taxonomic scope" value="Bacteria"/>
</dbReference>
<dbReference type="HOGENOM" id="CLU_171174_2_0_6"/>
<dbReference type="Proteomes" id="UP000002334">
    <property type="component" value="Chromosome"/>
</dbReference>
<dbReference type="GO" id="GO:0005737">
    <property type="term" value="C:cytoplasm"/>
    <property type="evidence" value="ECO:0007669"/>
    <property type="project" value="UniProtKB-SubCell"/>
</dbReference>
<dbReference type="GO" id="GO:0000917">
    <property type="term" value="P:division septum assembly"/>
    <property type="evidence" value="ECO:0007669"/>
    <property type="project" value="UniProtKB-KW"/>
</dbReference>
<dbReference type="GO" id="GO:0043093">
    <property type="term" value="P:FtsZ-dependent cytokinesis"/>
    <property type="evidence" value="ECO:0007669"/>
    <property type="project" value="UniProtKB-UniRule"/>
</dbReference>
<dbReference type="Gene3D" id="1.20.5.340">
    <property type="match status" value="1"/>
</dbReference>
<dbReference type="HAMAP" id="MF_01196">
    <property type="entry name" value="ZapB"/>
    <property type="match status" value="1"/>
</dbReference>
<dbReference type="InterPro" id="IPR009252">
    <property type="entry name" value="Cell_div_ZapB"/>
</dbReference>
<dbReference type="Pfam" id="PF06005">
    <property type="entry name" value="ZapB"/>
    <property type="match status" value="1"/>
</dbReference>
<name>ZAPB_HAMD5</name>
<reference key="1">
    <citation type="journal article" date="2009" name="Proc. Natl. Acad. Sci. U.S.A.">
        <title>Hamiltonella defensa, genome evolution of protective bacterial endosymbiont from pathogenic ancestors.</title>
        <authorList>
            <person name="Degnan P.H."/>
            <person name="Yu Y."/>
            <person name="Sisneros N."/>
            <person name="Wing R.A."/>
            <person name="Moran N.A."/>
        </authorList>
    </citation>
    <scope>NUCLEOTIDE SEQUENCE [LARGE SCALE GENOMIC DNA]</scope>
    <source>
        <strain>5AT</strain>
    </source>
</reference>
<feature type="chain" id="PRO_1000213804" description="Cell division protein ZapB">
    <location>
        <begin position="1"/>
        <end position="79"/>
    </location>
</feature>
<feature type="coiled-coil region" evidence="1">
    <location>
        <begin position="1"/>
        <end position="78"/>
    </location>
</feature>
<proteinExistence type="inferred from homology"/>
<comment type="function">
    <text evidence="1">Non-essential, abundant cell division factor that is required for proper Z-ring formation. It is recruited early to the divisome by direct interaction with FtsZ, stimulating Z-ring assembly and thereby promoting cell division earlier in the cell cycle. Its recruitment to the Z-ring requires functional FtsA or ZipA.</text>
</comment>
<comment type="subunit">
    <text evidence="1">Homodimer. The ends of the coiled-coil dimer bind to each other, forming polymers. Interacts with FtsZ.</text>
</comment>
<comment type="subcellular location">
    <subcellularLocation>
        <location evidence="1">Cytoplasm</location>
    </subcellularLocation>
    <text evidence="1">Localizes to the septum at mid-cell, in a FtsZ-like pattern.</text>
</comment>
<comment type="similarity">
    <text evidence="1">Belongs to the ZapB family.</text>
</comment>
<gene>
    <name evidence="1" type="primary">zapB</name>
    <name type="ordered locus">HDEF_0561</name>
</gene>
<sequence length="79" mass="9229">MSLEALDQLQEKVQKMLEANALLQMEIEEFKEKNIVLEEKINAISAQQKDLVDQNNELKQEKTVWQNRLNSLLGKMDDI</sequence>
<organism>
    <name type="scientific">Hamiltonella defensa subsp. Acyrthosiphon pisum (strain 5AT)</name>
    <dbReference type="NCBI Taxonomy" id="572265"/>
    <lineage>
        <taxon>Bacteria</taxon>
        <taxon>Pseudomonadati</taxon>
        <taxon>Pseudomonadota</taxon>
        <taxon>Gammaproteobacteria</taxon>
        <taxon>Enterobacterales</taxon>
        <taxon>Enterobacteriaceae</taxon>
        <taxon>aphid secondary symbionts</taxon>
        <taxon>Candidatus Hamiltonella</taxon>
    </lineage>
</organism>
<accession>C4K415</accession>